<proteinExistence type="inferred from homology"/>
<feature type="chain" id="PRO_0000296942" description="Putative manganese efflux pump MntP">
    <location>
        <begin position="1"/>
        <end position="194"/>
    </location>
</feature>
<feature type="transmembrane region" description="Helical" evidence="1">
    <location>
        <begin position="3"/>
        <end position="23"/>
    </location>
</feature>
<feature type="transmembrane region" description="Helical" evidence="1">
    <location>
        <begin position="37"/>
        <end position="57"/>
    </location>
</feature>
<feature type="transmembrane region" description="Helical" evidence="1">
    <location>
        <begin position="69"/>
        <end position="89"/>
    </location>
</feature>
<feature type="transmembrane region" description="Helical" evidence="1">
    <location>
        <begin position="110"/>
        <end position="132"/>
    </location>
</feature>
<feature type="transmembrane region" description="Helical" evidence="1">
    <location>
        <begin position="147"/>
        <end position="167"/>
    </location>
</feature>
<feature type="transmembrane region" description="Helical" evidence="1">
    <location>
        <begin position="172"/>
        <end position="192"/>
    </location>
</feature>
<comment type="function">
    <text evidence="1">Probably functions as a manganese efflux pump.</text>
</comment>
<comment type="subcellular location">
    <subcellularLocation>
        <location evidence="1">Cell inner membrane</location>
        <topology evidence="1">Multi-pass membrane protein</topology>
    </subcellularLocation>
</comment>
<comment type="similarity">
    <text evidence="1">Belongs to the MntP (TC 9.B.29) family.</text>
</comment>
<organism>
    <name type="scientific">Xanthomonas oryzae pv. oryzae (strain MAFF 311018)</name>
    <dbReference type="NCBI Taxonomy" id="342109"/>
    <lineage>
        <taxon>Bacteria</taxon>
        <taxon>Pseudomonadati</taxon>
        <taxon>Pseudomonadota</taxon>
        <taxon>Gammaproteobacteria</taxon>
        <taxon>Lysobacterales</taxon>
        <taxon>Lysobacteraceae</taxon>
        <taxon>Xanthomonas</taxon>
    </lineage>
</organism>
<reference key="1">
    <citation type="journal article" date="2005" name="Jpn. Agric. Res. Q.">
        <title>Genome sequence of Xanthomonas oryzae pv. oryzae suggests contribution of large numbers of effector genes and insertion sequences to its race diversity.</title>
        <authorList>
            <person name="Ochiai H."/>
            <person name="Inoue Y."/>
            <person name="Takeya M."/>
            <person name="Sasaki A."/>
            <person name="Kaku H."/>
        </authorList>
    </citation>
    <scope>NUCLEOTIDE SEQUENCE [LARGE SCALE GENOMIC DNA]</scope>
    <source>
        <strain>MAFF 311018</strain>
    </source>
</reference>
<gene>
    <name evidence="1" type="primary">mntP</name>
    <name type="ordered locus">XOO0309</name>
</gene>
<keyword id="KW-0997">Cell inner membrane</keyword>
<keyword id="KW-1003">Cell membrane</keyword>
<keyword id="KW-0406">Ion transport</keyword>
<keyword id="KW-0464">Manganese</keyword>
<keyword id="KW-0472">Membrane</keyword>
<keyword id="KW-0812">Transmembrane</keyword>
<keyword id="KW-1133">Transmembrane helix</keyword>
<keyword id="KW-0813">Transport</keyword>
<sequence>MSPFSIVLIGFAMSTDAFAAAIGKGAAMRKPQWRDALRAGLIFGCIEAITPVIGWVLGRAASSYLSAYDHWIAFVLLGALGTHMMIAGLRNGPDDANDAEAKTPKRHGLLGLATTGFATSIDAMAVGVSLAFLDVHIGVVAVVVGLCTFSMVTAGVMLGRALGNLIGKRAEILGGLILVIVGSVILYEHLGAAT</sequence>
<name>MNTP_XANOM</name>
<dbReference type="EMBL" id="AP008229">
    <property type="protein sequence ID" value="BAE67064.1"/>
    <property type="molecule type" value="Genomic_DNA"/>
</dbReference>
<dbReference type="RefSeq" id="WP_011407353.1">
    <property type="nucleotide sequence ID" value="NC_007705.1"/>
</dbReference>
<dbReference type="KEGG" id="xom:XOO0309"/>
<dbReference type="HOGENOM" id="CLU_096410_0_0_6"/>
<dbReference type="GO" id="GO:0005886">
    <property type="term" value="C:plasma membrane"/>
    <property type="evidence" value="ECO:0007669"/>
    <property type="project" value="UniProtKB-SubCell"/>
</dbReference>
<dbReference type="GO" id="GO:0005384">
    <property type="term" value="F:manganese ion transmembrane transporter activity"/>
    <property type="evidence" value="ECO:0007669"/>
    <property type="project" value="UniProtKB-UniRule"/>
</dbReference>
<dbReference type="HAMAP" id="MF_01521">
    <property type="entry name" value="MntP_pump"/>
    <property type="match status" value="1"/>
</dbReference>
<dbReference type="InterPro" id="IPR003810">
    <property type="entry name" value="Mntp/YtaF"/>
</dbReference>
<dbReference type="InterPro" id="IPR022929">
    <property type="entry name" value="Put_MntP"/>
</dbReference>
<dbReference type="PANTHER" id="PTHR35529">
    <property type="entry name" value="MANGANESE EFFLUX PUMP MNTP-RELATED"/>
    <property type="match status" value="1"/>
</dbReference>
<dbReference type="PANTHER" id="PTHR35529:SF1">
    <property type="entry name" value="MANGANESE EFFLUX PUMP MNTP-RELATED"/>
    <property type="match status" value="1"/>
</dbReference>
<dbReference type="Pfam" id="PF02659">
    <property type="entry name" value="Mntp"/>
    <property type="match status" value="1"/>
</dbReference>
<evidence type="ECO:0000255" key="1">
    <source>
        <dbReference type="HAMAP-Rule" id="MF_01521"/>
    </source>
</evidence>
<protein>
    <recommendedName>
        <fullName evidence="1">Putative manganese efflux pump MntP</fullName>
    </recommendedName>
</protein>
<accession>Q2P8R3</accession>